<sequence length="297" mass="31126">MPEAGLAEAFGVTEEARAKINLALHVTGQRPDGYHLLEMLVTFADCGDRLGFLPAQADAFTLSGPFGAMLAGDGNNLVLRARDLLREQVGALAFPVHIHLQKNLPIASGIGGGSADAAATLRGLMRLWGMDLPAETLASLALTLGADVPMCFESRPLIARGIGEKIEAVPDLPAFAMVLANPLKGVSTPEVFRRLAAKNNPALHLARSLSATSDWLTAIGSARNDLEPPACELVPEIAMISQMLQAQGALITRMSGSGATCFGIFSTMTAAQEAAAALHGERPDWYVQATETVSGGM</sequence>
<protein>
    <recommendedName>
        <fullName evidence="1">4-diphosphocytidyl-2-C-methyl-D-erythritol kinase</fullName>
        <shortName evidence="1">CMK</shortName>
        <ecNumber evidence="1">2.7.1.148</ecNumber>
    </recommendedName>
    <alternativeName>
        <fullName evidence="1">4-(cytidine-5'-diphospho)-2-C-methyl-D-erythritol kinase</fullName>
    </alternativeName>
</protein>
<gene>
    <name evidence="1" type="primary">ispE</name>
    <name type="ordered locus">RHECIAT_CH0000963</name>
</gene>
<name>ISPE_RHIE6</name>
<keyword id="KW-0067">ATP-binding</keyword>
<keyword id="KW-0414">Isoprene biosynthesis</keyword>
<keyword id="KW-0418">Kinase</keyword>
<keyword id="KW-0547">Nucleotide-binding</keyword>
<keyword id="KW-0808">Transferase</keyword>
<comment type="function">
    <text evidence="1">Catalyzes the phosphorylation of the position 2 hydroxy group of 4-diphosphocytidyl-2C-methyl-D-erythritol.</text>
</comment>
<comment type="catalytic activity">
    <reaction evidence="1">
        <text>4-CDP-2-C-methyl-D-erythritol + ATP = 4-CDP-2-C-methyl-D-erythritol 2-phosphate + ADP + H(+)</text>
        <dbReference type="Rhea" id="RHEA:18437"/>
        <dbReference type="ChEBI" id="CHEBI:15378"/>
        <dbReference type="ChEBI" id="CHEBI:30616"/>
        <dbReference type="ChEBI" id="CHEBI:57823"/>
        <dbReference type="ChEBI" id="CHEBI:57919"/>
        <dbReference type="ChEBI" id="CHEBI:456216"/>
        <dbReference type="EC" id="2.7.1.148"/>
    </reaction>
</comment>
<comment type="pathway">
    <text evidence="1">Isoprenoid biosynthesis; isopentenyl diphosphate biosynthesis via DXP pathway; isopentenyl diphosphate from 1-deoxy-D-xylulose 5-phosphate: step 3/6.</text>
</comment>
<comment type="similarity">
    <text evidence="1">Belongs to the GHMP kinase family. IspE subfamily.</text>
</comment>
<accession>B3PRG5</accession>
<dbReference type="EC" id="2.7.1.148" evidence="1"/>
<dbReference type="EMBL" id="CP001074">
    <property type="protein sequence ID" value="ACE89948.1"/>
    <property type="molecule type" value="Genomic_DNA"/>
</dbReference>
<dbReference type="SMR" id="B3PRG5"/>
<dbReference type="KEGG" id="rec:RHECIAT_CH0000963"/>
<dbReference type="eggNOG" id="COG1947">
    <property type="taxonomic scope" value="Bacteria"/>
</dbReference>
<dbReference type="HOGENOM" id="CLU_053057_1_0_5"/>
<dbReference type="UniPathway" id="UPA00056">
    <property type="reaction ID" value="UER00094"/>
</dbReference>
<dbReference type="Proteomes" id="UP000008817">
    <property type="component" value="Chromosome"/>
</dbReference>
<dbReference type="GO" id="GO:0050515">
    <property type="term" value="F:4-(cytidine 5'-diphospho)-2-C-methyl-D-erythritol kinase activity"/>
    <property type="evidence" value="ECO:0007669"/>
    <property type="project" value="UniProtKB-UniRule"/>
</dbReference>
<dbReference type="GO" id="GO:0005524">
    <property type="term" value="F:ATP binding"/>
    <property type="evidence" value="ECO:0007669"/>
    <property type="project" value="UniProtKB-UniRule"/>
</dbReference>
<dbReference type="GO" id="GO:0019288">
    <property type="term" value="P:isopentenyl diphosphate biosynthetic process, methylerythritol 4-phosphate pathway"/>
    <property type="evidence" value="ECO:0007669"/>
    <property type="project" value="UniProtKB-UniRule"/>
</dbReference>
<dbReference type="GO" id="GO:0016114">
    <property type="term" value="P:terpenoid biosynthetic process"/>
    <property type="evidence" value="ECO:0007669"/>
    <property type="project" value="InterPro"/>
</dbReference>
<dbReference type="Gene3D" id="3.30.230.10">
    <property type="match status" value="1"/>
</dbReference>
<dbReference type="Gene3D" id="3.30.70.890">
    <property type="entry name" value="GHMP kinase, C-terminal domain"/>
    <property type="match status" value="1"/>
</dbReference>
<dbReference type="HAMAP" id="MF_00061">
    <property type="entry name" value="IspE"/>
    <property type="match status" value="1"/>
</dbReference>
<dbReference type="InterPro" id="IPR013750">
    <property type="entry name" value="GHMP_kinase_C_dom"/>
</dbReference>
<dbReference type="InterPro" id="IPR036554">
    <property type="entry name" value="GHMP_kinase_C_sf"/>
</dbReference>
<dbReference type="InterPro" id="IPR006204">
    <property type="entry name" value="GHMP_kinase_N_dom"/>
</dbReference>
<dbReference type="InterPro" id="IPR004424">
    <property type="entry name" value="IspE"/>
</dbReference>
<dbReference type="InterPro" id="IPR020568">
    <property type="entry name" value="Ribosomal_Su5_D2-typ_SF"/>
</dbReference>
<dbReference type="InterPro" id="IPR014721">
    <property type="entry name" value="Ribsml_uS5_D2-typ_fold_subgr"/>
</dbReference>
<dbReference type="NCBIfam" id="TIGR00154">
    <property type="entry name" value="ispE"/>
    <property type="match status" value="1"/>
</dbReference>
<dbReference type="NCBIfam" id="NF011202">
    <property type="entry name" value="PRK14608.1"/>
    <property type="match status" value="1"/>
</dbReference>
<dbReference type="PANTHER" id="PTHR43527">
    <property type="entry name" value="4-DIPHOSPHOCYTIDYL-2-C-METHYL-D-ERYTHRITOL KINASE, CHLOROPLASTIC"/>
    <property type="match status" value="1"/>
</dbReference>
<dbReference type="PANTHER" id="PTHR43527:SF2">
    <property type="entry name" value="4-DIPHOSPHOCYTIDYL-2-C-METHYL-D-ERYTHRITOL KINASE, CHLOROPLASTIC"/>
    <property type="match status" value="1"/>
</dbReference>
<dbReference type="Pfam" id="PF08544">
    <property type="entry name" value="GHMP_kinases_C"/>
    <property type="match status" value="1"/>
</dbReference>
<dbReference type="Pfam" id="PF00288">
    <property type="entry name" value="GHMP_kinases_N"/>
    <property type="match status" value="1"/>
</dbReference>
<dbReference type="PIRSF" id="PIRSF010376">
    <property type="entry name" value="IspE"/>
    <property type="match status" value="1"/>
</dbReference>
<dbReference type="SUPFAM" id="SSF55060">
    <property type="entry name" value="GHMP Kinase, C-terminal domain"/>
    <property type="match status" value="1"/>
</dbReference>
<dbReference type="SUPFAM" id="SSF54211">
    <property type="entry name" value="Ribosomal protein S5 domain 2-like"/>
    <property type="match status" value="1"/>
</dbReference>
<reference key="1">
    <citation type="journal article" date="2010" name="Appl. Environ. Microbiol.">
        <title>Conserved symbiotic plasmid DNA sequences in the multireplicon pangenomic structure of Rhizobium etli.</title>
        <authorList>
            <person name="Gonzalez V."/>
            <person name="Acosta J.L."/>
            <person name="Santamaria R.I."/>
            <person name="Bustos P."/>
            <person name="Fernandez J.L."/>
            <person name="Hernandez Gonzalez I.L."/>
            <person name="Diaz R."/>
            <person name="Flores M."/>
            <person name="Palacios R."/>
            <person name="Mora J."/>
            <person name="Davila G."/>
        </authorList>
    </citation>
    <scope>NUCLEOTIDE SEQUENCE [LARGE SCALE GENOMIC DNA]</scope>
    <source>
        <strain>CIAT 652</strain>
    </source>
</reference>
<feature type="chain" id="PRO_1000092108" description="4-diphosphocytidyl-2-C-methyl-D-erythritol kinase">
    <location>
        <begin position="1"/>
        <end position="297"/>
    </location>
</feature>
<feature type="active site" evidence="1">
    <location>
        <position position="19"/>
    </location>
</feature>
<feature type="active site" evidence="1">
    <location>
        <position position="147"/>
    </location>
</feature>
<feature type="binding site" evidence="1">
    <location>
        <begin position="105"/>
        <end position="115"/>
    </location>
    <ligand>
        <name>ATP</name>
        <dbReference type="ChEBI" id="CHEBI:30616"/>
    </ligand>
</feature>
<organism>
    <name type="scientific">Rhizobium etli (strain CIAT 652)</name>
    <dbReference type="NCBI Taxonomy" id="491916"/>
    <lineage>
        <taxon>Bacteria</taxon>
        <taxon>Pseudomonadati</taxon>
        <taxon>Pseudomonadota</taxon>
        <taxon>Alphaproteobacteria</taxon>
        <taxon>Hyphomicrobiales</taxon>
        <taxon>Rhizobiaceae</taxon>
        <taxon>Rhizobium/Agrobacterium group</taxon>
        <taxon>Rhizobium</taxon>
    </lineage>
</organism>
<proteinExistence type="inferred from homology"/>
<evidence type="ECO:0000255" key="1">
    <source>
        <dbReference type="HAMAP-Rule" id="MF_00061"/>
    </source>
</evidence>